<sequence>MSSHRRKAKGRNRRSHRAMRVAHLELATYELAATESNPESSHPGYEAAMADRPQPGWRESLKMRVSKPFGMLMLSIWILLFVCYYLSYYLCSGSSYFVLANGHILPNSENAHGQSLEEDSALEALLNFFFPTTCNLRENQVAKPCNELQDLSESECLRHKCCFSSSGTTSFKCFAPFRDVPKQMMQMFGLGAISLILVCLPIYCRSLFWRSEPADDLQRQDNRVVTGLKKQRRKRKRKSEMLQKAARGREEHGDE</sequence>
<organism>
    <name type="scientific">Homo sapiens</name>
    <name type="common">Human</name>
    <dbReference type="NCBI Taxonomy" id="9606"/>
    <lineage>
        <taxon>Eukaryota</taxon>
        <taxon>Metazoa</taxon>
        <taxon>Chordata</taxon>
        <taxon>Craniata</taxon>
        <taxon>Vertebrata</taxon>
        <taxon>Euteleostomi</taxon>
        <taxon>Mammalia</taxon>
        <taxon>Eutheria</taxon>
        <taxon>Euarchontoglires</taxon>
        <taxon>Primates</taxon>
        <taxon>Haplorrhini</taxon>
        <taxon>Catarrhini</taxon>
        <taxon>Hominidae</taxon>
        <taxon>Homo</taxon>
    </lineage>
</organism>
<dbReference type="EMBL" id="AY211917">
    <property type="protein sequence ID" value="AAO65170.1"/>
    <property type="molecule type" value="mRNA"/>
</dbReference>
<dbReference type="EMBL" id="AK098602">
    <property type="protein sequence ID" value="BAC05349.1"/>
    <property type="molecule type" value="mRNA"/>
</dbReference>
<dbReference type="EMBL" id="CH471171">
    <property type="protein sequence ID" value="EAW61291.1"/>
    <property type="molecule type" value="Genomic_DNA"/>
</dbReference>
<dbReference type="EMBL" id="CH471171">
    <property type="protein sequence ID" value="EAW61292.1"/>
    <property type="molecule type" value="Genomic_DNA"/>
</dbReference>
<dbReference type="EMBL" id="BC034320">
    <property type="protein sequence ID" value="AAH34320.1"/>
    <property type="molecule type" value="mRNA"/>
</dbReference>
<dbReference type="CCDS" id="CCDS14683.1"/>
<dbReference type="RefSeq" id="NP_689791.1">
    <property type="nucleotide sequence ID" value="NM_152578.3"/>
</dbReference>
<dbReference type="SMR" id="Q8N0W7"/>
<dbReference type="BioGRID" id="127690">
    <property type="interactions" value="14"/>
</dbReference>
<dbReference type="FunCoup" id="Q8N0W7">
    <property type="interactions" value="9"/>
</dbReference>
<dbReference type="IntAct" id="Q8N0W7">
    <property type="interactions" value="11"/>
</dbReference>
<dbReference type="STRING" id="9606.ENSP00000359498"/>
<dbReference type="iPTMnet" id="Q8N0W7"/>
<dbReference type="PhosphoSitePlus" id="Q8N0W7"/>
<dbReference type="BioMuta" id="FMR1NB"/>
<dbReference type="DMDM" id="74728471"/>
<dbReference type="MassIVE" id="Q8N0W7"/>
<dbReference type="PaxDb" id="9606-ENSP00000359498"/>
<dbReference type="PeptideAtlas" id="Q8N0W7"/>
<dbReference type="ProteomicsDB" id="71477"/>
<dbReference type="Antibodypedia" id="549">
    <property type="antibodies" value="110 antibodies from 23 providers"/>
</dbReference>
<dbReference type="DNASU" id="158521"/>
<dbReference type="Ensembl" id="ENST00000370467.8">
    <property type="protein sequence ID" value="ENSP00000359498.3"/>
    <property type="gene ID" value="ENSG00000176988.9"/>
</dbReference>
<dbReference type="GeneID" id="158521"/>
<dbReference type="KEGG" id="hsa:158521"/>
<dbReference type="MANE-Select" id="ENST00000370467.8">
    <property type="protein sequence ID" value="ENSP00000359498.3"/>
    <property type="RefSeq nucleotide sequence ID" value="NM_152578.3"/>
    <property type="RefSeq protein sequence ID" value="NP_689791.1"/>
</dbReference>
<dbReference type="UCSC" id="uc004fcm.3">
    <property type="organism name" value="human"/>
</dbReference>
<dbReference type="AGR" id="HGNC:26372"/>
<dbReference type="CTD" id="158521"/>
<dbReference type="DisGeNET" id="158521"/>
<dbReference type="GeneCards" id="FMR1NB"/>
<dbReference type="HGNC" id="HGNC:26372">
    <property type="gene designation" value="FMR1NB"/>
</dbReference>
<dbReference type="HPA" id="ENSG00000176988">
    <property type="expression patterns" value="Tissue enriched (testis)"/>
</dbReference>
<dbReference type="neXtProt" id="NX_Q8N0W7"/>
<dbReference type="OpenTargets" id="ENSG00000176988"/>
<dbReference type="PharmGKB" id="PA134927784"/>
<dbReference type="VEuPathDB" id="HostDB:ENSG00000176988"/>
<dbReference type="eggNOG" id="ENOG502SB9N">
    <property type="taxonomic scope" value="Eukaryota"/>
</dbReference>
<dbReference type="GeneTree" id="ENSGT00390000007953"/>
<dbReference type="HOGENOM" id="CLU_095005_0_0_1"/>
<dbReference type="InParanoid" id="Q8N0W7"/>
<dbReference type="OMA" id="PIYCCSL"/>
<dbReference type="OrthoDB" id="9837391at2759"/>
<dbReference type="PAN-GO" id="Q8N0W7">
    <property type="GO annotations" value="0 GO annotations based on evolutionary models"/>
</dbReference>
<dbReference type="PhylomeDB" id="Q8N0W7"/>
<dbReference type="TreeFam" id="TF338231"/>
<dbReference type="PathwayCommons" id="Q8N0W7"/>
<dbReference type="SignaLink" id="Q8N0W7"/>
<dbReference type="BioGRID-ORCS" id="158521">
    <property type="hits" value="9 hits in 772 CRISPR screens"/>
</dbReference>
<dbReference type="GenomeRNAi" id="158521"/>
<dbReference type="Pharos" id="Q8N0W7">
    <property type="development level" value="Tbio"/>
</dbReference>
<dbReference type="PRO" id="PR:Q8N0W7"/>
<dbReference type="Proteomes" id="UP000005640">
    <property type="component" value="Chromosome X"/>
</dbReference>
<dbReference type="RNAct" id="Q8N0W7">
    <property type="molecule type" value="protein"/>
</dbReference>
<dbReference type="Bgee" id="ENSG00000176988">
    <property type="expression patterns" value="Expressed in right testis and 35 other cell types or tissues"/>
</dbReference>
<dbReference type="ExpressionAtlas" id="Q8N0W7">
    <property type="expression patterns" value="baseline and differential"/>
</dbReference>
<dbReference type="GO" id="GO:0016020">
    <property type="term" value="C:membrane"/>
    <property type="evidence" value="ECO:0007669"/>
    <property type="project" value="UniProtKB-SubCell"/>
</dbReference>
<dbReference type="InterPro" id="IPR055331">
    <property type="entry name" value="FMR1-like"/>
</dbReference>
<dbReference type="PANTHER" id="PTHR37360:SF1">
    <property type="entry name" value="FMR1 NEIGHBOR PROTEIN"/>
    <property type="match status" value="1"/>
</dbReference>
<dbReference type="PANTHER" id="PTHR37360">
    <property type="entry name" value="FRAGILE X MENTAL RETARDATION 1 NEIGHBOR PROTEIN"/>
    <property type="match status" value="1"/>
</dbReference>
<protein>
    <recommendedName>
        <fullName evidence="4">FMR1 neighbor protein</fullName>
    </recommendedName>
    <alternativeName>
        <fullName>Cancer/testis antigen 37</fullName>
        <shortName>CT37</shortName>
    </alternativeName>
    <alternativeName>
        <fullName>Sarcoma antigen NY-SAR-35</fullName>
    </alternativeName>
</protein>
<proteinExistence type="evidence at protein level"/>
<evidence type="ECO:0000255" key="1"/>
<evidence type="ECO:0000256" key="2">
    <source>
        <dbReference type="SAM" id="MobiDB-lite"/>
    </source>
</evidence>
<evidence type="ECO:0000269" key="3">
    <source>
    </source>
</evidence>
<evidence type="ECO:0000305" key="4"/>
<evidence type="ECO:0000312" key="5">
    <source>
        <dbReference type="HGNC" id="HGNC:26372"/>
    </source>
</evidence>
<accession>Q8N0W7</accession>
<accession>D3DWT3</accession>
<name>FMR1N_HUMAN</name>
<feature type="chain" id="PRO_0000281735" description="FMR1 neighbor protein">
    <location>
        <begin position="1"/>
        <end position="255"/>
    </location>
</feature>
<feature type="topological domain" description="Cytoplasmic" evidence="1">
    <location>
        <begin position="1"/>
        <end position="68"/>
    </location>
</feature>
<feature type="transmembrane region" description="Helical" evidence="1">
    <location>
        <begin position="69"/>
        <end position="89"/>
    </location>
</feature>
<feature type="topological domain" description="Extracellular" evidence="1">
    <location>
        <begin position="90"/>
        <end position="183"/>
    </location>
</feature>
<feature type="transmembrane region" description="Helical" evidence="1">
    <location>
        <begin position="184"/>
        <end position="204"/>
    </location>
</feature>
<feature type="topological domain" description="Cytoplasmic" evidence="1">
    <location>
        <begin position="205"/>
        <end position="255"/>
    </location>
</feature>
<feature type="domain" description="P-type">
    <location>
        <begin position="125"/>
        <end position="184"/>
    </location>
</feature>
<feature type="region of interest" description="Disordered" evidence="2">
    <location>
        <begin position="220"/>
        <end position="255"/>
    </location>
</feature>
<feature type="compositionally biased region" description="Basic residues" evidence="2">
    <location>
        <begin position="229"/>
        <end position="238"/>
    </location>
</feature>
<feature type="sequence variant" id="VAR_031254" description="In dbSNP:rs764631.">
    <original>A</original>
    <variation>V</variation>
    <location>
        <position position="142"/>
    </location>
</feature>
<gene>
    <name evidence="5" type="primary">FMR1NB</name>
</gene>
<reference key="1">
    <citation type="journal article" date="2003" name="Proc. Natl. Acad. Sci. U.S.A.">
        <title>Immunomic analysis of human sarcoma.</title>
        <authorList>
            <person name="Lee S.-Y."/>
            <person name="Obata Y."/>
            <person name="Yoshida M."/>
            <person name="Stockert E."/>
            <person name="Williamson B."/>
            <person name="Jungbluth A.A."/>
            <person name="Chen Y.-T."/>
            <person name="Old L.J."/>
            <person name="Scanlan M.J."/>
        </authorList>
    </citation>
    <scope>NUCLEOTIDE SEQUENCE [MRNA]</scope>
    <scope>TISSUE SPECIFICITY</scope>
</reference>
<reference key="2">
    <citation type="journal article" date="2004" name="Nat. Genet.">
        <title>Complete sequencing and characterization of 21,243 full-length human cDNAs.</title>
        <authorList>
            <person name="Ota T."/>
            <person name="Suzuki Y."/>
            <person name="Nishikawa T."/>
            <person name="Otsuki T."/>
            <person name="Sugiyama T."/>
            <person name="Irie R."/>
            <person name="Wakamatsu A."/>
            <person name="Hayashi K."/>
            <person name="Sato H."/>
            <person name="Nagai K."/>
            <person name="Kimura K."/>
            <person name="Makita H."/>
            <person name="Sekine M."/>
            <person name="Obayashi M."/>
            <person name="Nishi T."/>
            <person name="Shibahara T."/>
            <person name="Tanaka T."/>
            <person name="Ishii S."/>
            <person name="Yamamoto J."/>
            <person name="Saito K."/>
            <person name="Kawai Y."/>
            <person name="Isono Y."/>
            <person name="Nakamura Y."/>
            <person name="Nagahari K."/>
            <person name="Murakami K."/>
            <person name="Yasuda T."/>
            <person name="Iwayanagi T."/>
            <person name="Wagatsuma M."/>
            <person name="Shiratori A."/>
            <person name="Sudo H."/>
            <person name="Hosoiri T."/>
            <person name="Kaku Y."/>
            <person name="Kodaira H."/>
            <person name="Kondo H."/>
            <person name="Sugawara M."/>
            <person name="Takahashi M."/>
            <person name="Kanda K."/>
            <person name="Yokoi T."/>
            <person name="Furuya T."/>
            <person name="Kikkawa E."/>
            <person name="Omura Y."/>
            <person name="Abe K."/>
            <person name="Kamihara K."/>
            <person name="Katsuta N."/>
            <person name="Sato K."/>
            <person name="Tanikawa M."/>
            <person name="Yamazaki M."/>
            <person name="Ninomiya K."/>
            <person name="Ishibashi T."/>
            <person name="Yamashita H."/>
            <person name="Murakawa K."/>
            <person name="Fujimori K."/>
            <person name="Tanai H."/>
            <person name="Kimata M."/>
            <person name="Watanabe M."/>
            <person name="Hiraoka S."/>
            <person name="Chiba Y."/>
            <person name="Ishida S."/>
            <person name="Ono Y."/>
            <person name="Takiguchi S."/>
            <person name="Watanabe S."/>
            <person name="Yosida M."/>
            <person name="Hotuta T."/>
            <person name="Kusano J."/>
            <person name="Kanehori K."/>
            <person name="Takahashi-Fujii A."/>
            <person name="Hara H."/>
            <person name="Tanase T.-O."/>
            <person name="Nomura Y."/>
            <person name="Togiya S."/>
            <person name="Komai F."/>
            <person name="Hara R."/>
            <person name="Takeuchi K."/>
            <person name="Arita M."/>
            <person name="Imose N."/>
            <person name="Musashino K."/>
            <person name="Yuuki H."/>
            <person name="Oshima A."/>
            <person name="Sasaki N."/>
            <person name="Aotsuka S."/>
            <person name="Yoshikawa Y."/>
            <person name="Matsunawa H."/>
            <person name="Ichihara T."/>
            <person name="Shiohata N."/>
            <person name="Sano S."/>
            <person name="Moriya S."/>
            <person name="Momiyama H."/>
            <person name="Satoh N."/>
            <person name="Takami S."/>
            <person name="Terashima Y."/>
            <person name="Suzuki O."/>
            <person name="Nakagawa S."/>
            <person name="Senoh A."/>
            <person name="Mizoguchi H."/>
            <person name="Goto Y."/>
            <person name="Shimizu F."/>
            <person name="Wakebe H."/>
            <person name="Hishigaki H."/>
            <person name="Watanabe T."/>
            <person name="Sugiyama A."/>
            <person name="Takemoto M."/>
            <person name="Kawakami B."/>
            <person name="Yamazaki M."/>
            <person name="Watanabe K."/>
            <person name="Kumagai A."/>
            <person name="Itakura S."/>
            <person name="Fukuzumi Y."/>
            <person name="Fujimori Y."/>
            <person name="Komiyama M."/>
            <person name="Tashiro H."/>
            <person name="Tanigami A."/>
            <person name="Fujiwara T."/>
            <person name="Ono T."/>
            <person name="Yamada K."/>
            <person name="Fujii Y."/>
            <person name="Ozaki K."/>
            <person name="Hirao M."/>
            <person name="Ohmori Y."/>
            <person name="Kawabata A."/>
            <person name="Hikiji T."/>
            <person name="Kobatake N."/>
            <person name="Inagaki H."/>
            <person name="Ikema Y."/>
            <person name="Okamoto S."/>
            <person name="Okitani R."/>
            <person name="Kawakami T."/>
            <person name="Noguchi S."/>
            <person name="Itoh T."/>
            <person name="Shigeta K."/>
            <person name="Senba T."/>
            <person name="Matsumura K."/>
            <person name="Nakajima Y."/>
            <person name="Mizuno T."/>
            <person name="Morinaga M."/>
            <person name="Sasaki M."/>
            <person name="Togashi T."/>
            <person name="Oyama M."/>
            <person name="Hata H."/>
            <person name="Watanabe M."/>
            <person name="Komatsu T."/>
            <person name="Mizushima-Sugano J."/>
            <person name="Satoh T."/>
            <person name="Shirai Y."/>
            <person name="Takahashi Y."/>
            <person name="Nakagawa K."/>
            <person name="Okumura K."/>
            <person name="Nagase T."/>
            <person name="Nomura N."/>
            <person name="Kikuchi H."/>
            <person name="Masuho Y."/>
            <person name="Yamashita R."/>
            <person name="Nakai K."/>
            <person name="Yada T."/>
            <person name="Nakamura Y."/>
            <person name="Ohara O."/>
            <person name="Isogai T."/>
            <person name="Sugano S."/>
        </authorList>
    </citation>
    <scope>NUCLEOTIDE SEQUENCE [LARGE SCALE MRNA]</scope>
    <source>
        <tissue>Testis</tissue>
    </source>
</reference>
<reference key="3">
    <citation type="submission" date="2005-09" db="EMBL/GenBank/DDBJ databases">
        <authorList>
            <person name="Mural R.J."/>
            <person name="Istrail S."/>
            <person name="Sutton G.G."/>
            <person name="Florea L."/>
            <person name="Halpern A.L."/>
            <person name="Mobarry C.M."/>
            <person name="Lippert R."/>
            <person name="Walenz B."/>
            <person name="Shatkay H."/>
            <person name="Dew I."/>
            <person name="Miller J.R."/>
            <person name="Flanigan M.J."/>
            <person name="Edwards N.J."/>
            <person name="Bolanos R."/>
            <person name="Fasulo D."/>
            <person name="Halldorsson B.V."/>
            <person name="Hannenhalli S."/>
            <person name="Turner R."/>
            <person name="Yooseph S."/>
            <person name="Lu F."/>
            <person name="Nusskern D.R."/>
            <person name="Shue B.C."/>
            <person name="Zheng X.H."/>
            <person name="Zhong F."/>
            <person name="Delcher A.L."/>
            <person name="Huson D.H."/>
            <person name="Kravitz S.A."/>
            <person name="Mouchard L."/>
            <person name="Reinert K."/>
            <person name="Remington K.A."/>
            <person name="Clark A.G."/>
            <person name="Waterman M.S."/>
            <person name="Eichler E.E."/>
            <person name="Adams M.D."/>
            <person name="Hunkapiller M.W."/>
            <person name="Myers E.W."/>
            <person name="Venter J.C."/>
        </authorList>
    </citation>
    <scope>NUCLEOTIDE SEQUENCE [LARGE SCALE GENOMIC DNA]</scope>
</reference>
<reference key="4">
    <citation type="journal article" date="2004" name="Genome Res.">
        <title>The status, quality, and expansion of the NIH full-length cDNA project: the Mammalian Gene Collection (MGC).</title>
        <authorList>
            <consortium name="The MGC Project Team"/>
        </authorList>
    </citation>
    <scope>NUCLEOTIDE SEQUENCE [LARGE SCALE MRNA]</scope>
    <source>
        <tissue>Testis</tissue>
    </source>
</reference>
<comment type="subcellular location">
    <subcellularLocation>
        <location evidence="4">Membrane</location>
        <topology evidence="4">Multi-pass membrane protein</topology>
    </subcellularLocation>
</comment>
<comment type="tissue specificity">
    <text evidence="3">Testis-specific. Expressed in melanoma, sarcoma, lung, breast, bladder, esophageal and ovarian cancers.</text>
</comment>
<keyword id="KW-0472">Membrane</keyword>
<keyword id="KW-1267">Proteomics identification</keyword>
<keyword id="KW-1185">Reference proteome</keyword>
<keyword id="KW-0812">Transmembrane</keyword>
<keyword id="KW-1133">Transmembrane helix</keyword>